<evidence type="ECO:0000255" key="1">
    <source>
        <dbReference type="HAMAP-Rule" id="MF_01893"/>
    </source>
</evidence>
<reference key="1">
    <citation type="submission" date="2007-10" db="EMBL/GenBank/DDBJ databases">
        <title>Complete sequence of Caldivirga maquilingensis IC-167.</title>
        <authorList>
            <consortium name="US DOE Joint Genome Institute"/>
            <person name="Copeland A."/>
            <person name="Lucas S."/>
            <person name="Lapidus A."/>
            <person name="Barry K."/>
            <person name="Glavina del Rio T."/>
            <person name="Dalin E."/>
            <person name="Tice H."/>
            <person name="Pitluck S."/>
            <person name="Saunders E."/>
            <person name="Brettin T."/>
            <person name="Bruce D."/>
            <person name="Detter J.C."/>
            <person name="Han C."/>
            <person name="Schmutz J."/>
            <person name="Larimer F."/>
            <person name="Land M."/>
            <person name="Hauser L."/>
            <person name="Kyrpides N."/>
            <person name="Ivanova N."/>
            <person name="Biddle J.F."/>
            <person name="Zhang Z."/>
            <person name="Fitz-Gibbon S.T."/>
            <person name="Lowe T.M."/>
            <person name="Saltikov C."/>
            <person name="House C.H."/>
            <person name="Richardson P."/>
        </authorList>
    </citation>
    <scope>NUCLEOTIDE SEQUENCE [LARGE SCALE GENOMIC DNA]</scope>
    <source>
        <strain>ATCC 700844 / DSM 13496 / JCM 10307 / IC-167</strain>
    </source>
</reference>
<keyword id="KW-0413">Isomerase</keyword>
<keyword id="KW-1185">Reference proteome</keyword>
<keyword id="KW-0694">RNA-binding</keyword>
<keyword id="KW-0819">tRNA processing</keyword>
<feature type="chain" id="PRO_0000407383" description="tRNA pseudouridine synthase Pus10">
    <location>
        <begin position="1"/>
        <end position="401"/>
    </location>
</feature>
<feature type="domain" description="THUMP" evidence="1">
    <location>
        <begin position="64"/>
        <end position="195"/>
    </location>
</feature>
<gene>
    <name evidence="1" type="primary">pus10</name>
    <name type="ordered locus">Cmaq_0954</name>
</gene>
<dbReference type="EC" id="5.4.99.25" evidence="1"/>
<dbReference type="EMBL" id="CP000852">
    <property type="protein sequence ID" value="ABW01786.1"/>
    <property type="molecule type" value="Genomic_DNA"/>
</dbReference>
<dbReference type="RefSeq" id="WP_012186005.1">
    <property type="nucleotide sequence ID" value="NC_009954.1"/>
</dbReference>
<dbReference type="SMR" id="A8MDD0"/>
<dbReference type="STRING" id="397948.Cmaq_0954"/>
<dbReference type="GeneID" id="5708948"/>
<dbReference type="KEGG" id="cma:Cmaq_0954"/>
<dbReference type="eggNOG" id="arCOG01015">
    <property type="taxonomic scope" value="Archaea"/>
</dbReference>
<dbReference type="HOGENOM" id="CLU_028780_2_0_2"/>
<dbReference type="OrthoDB" id="10348at2157"/>
<dbReference type="Proteomes" id="UP000001137">
    <property type="component" value="Chromosome"/>
</dbReference>
<dbReference type="GO" id="GO:0000049">
    <property type="term" value="F:tRNA binding"/>
    <property type="evidence" value="ECO:0007669"/>
    <property type="project" value="InterPro"/>
</dbReference>
<dbReference type="GO" id="GO:0160148">
    <property type="term" value="F:tRNA pseudouridine(55) synthase activity"/>
    <property type="evidence" value="ECO:0007669"/>
    <property type="project" value="UniProtKB-EC"/>
</dbReference>
<dbReference type="GO" id="GO:0031119">
    <property type="term" value="P:tRNA pseudouridine synthesis"/>
    <property type="evidence" value="ECO:0007669"/>
    <property type="project" value="UniProtKB-UniRule"/>
</dbReference>
<dbReference type="Gene3D" id="3.30.70.2510">
    <property type="match status" value="1"/>
</dbReference>
<dbReference type="HAMAP" id="MF_01893">
    <property type="entry name" value="Pus10_arch"/>
    <property type="match status" value="1"/>
</dbReference>
<dbReference type="InterPro" id="IPR005912">
    <property type="entry name" value="Pus10"/>
</dbReference>
<dbReference type="InterPro" id="IPR039894">
    <property type="entry name" value="Pus10-like"/>
</dbReference>
<dbReference type="InterPro" id="IPR048741">
    <property type="entry name" value="Pus10-like_C"/>
</dbReference>
<dbReference type="InterPro" id="IPR055174">
    <property type="entry name" value="Pus10_THUMP_arc"/>
</dbReference>
<dbReference type="InterPro" id="IPR004114">
    <property type="entry name" value="THUMP_dom"/>
</dbReference>
<dbReference type="NCBIfam" id="TIGR01213">
    <property type="entry name" value="pseudo_Pus10arc"/>
    <property type="match status" value="1"/>
</dbReference>
<dbReference type="PANTHER" id="PTHR21568">
    <property type="entry name" value="TRNA PSEUDOURIDINE SYNTHASE PUS10"/>
    <property type="match status" value="1"/>
</dbReference>
<dbReference type="PANTHER" id="PTHR21568:SF0">
    <property type="entry name" value="TRNA PSEUDOURIDINE SYNTHASE PUS10"/>
    <property type="match status" value="1"/>
</dbReference>
<dbReference type="Pfam" id="PF21238">
    <property type="entry name" value="Pus10_C"/>
    <property type="match status" value="1"/>
</dbReference>
<dbReference type="Pfam" id="PF22023">
    <property type="entry name" value="Pus10_THUMP_arc"/>
    <property type="match status" value="1"/>
</dbReference>
<dbReference type="PROSITE" id="PS51165">
    <property type="entry name" value="THUMP"/>
    <property type="match status" value="1"/>
</dbReference>
<comment type="function">
    <text evidence="1">Responsible for synthesis of pseudouridine from uracil-54 and uracil-55 in the psi GC loop of transfer RNAs.</text>
</comment>
<comment type="catalytic activity">
    <reaction evidence="1">
        <text>uridine(54) in tRNA = pseudouridine(54) in tRNA</text>
        <dbReference type="Rhea" id="RHEA:57876"/>
        <dbReference type="Rhea" id="RHEA-COMP:10193"/>
        <dbReference type="Rhea" id="RHEA-COMP:14141"/>
        <dbReference type="ChEBI" id="CHEBI:65314"/>
        <dbReference type="ChEBI" id="CHEBI:65315"/>
    </reaction>
</comment>
<comment type="catalytic activity">
    <reaction evidence="1">
        <text>uridine(55) in tRNA = pseudouridine(55) in tRNA</text>
        <dbReference type="Rhea" id="RHEA:42532"/>
        <dbReference type="Rhea" id="RHEA-COMP:10101"/>
        <dbReference type="Rhea" id="RHEA-COMP:10102"/>
        <dbReference type="ChEBI" id="CHEBI:65314"/>
        <dbReference type="ChEBI" id="CHEBI:65315"/>
        <dbReference type="EC" id="5.4.99.25"/>
    </reaction>
</comment>
<comment type="similarity">
    <text evidence="1">Belongs to the pseudouridine synthase Pus10 family.</text>
</comment>
<protein>
    <recommendedName>
        <fullName evidence="1">tRNA pseudouridine synthase Pus10</fullName>
        <ecNumber evidence="1">5.4.99.25</ecNumber>
    </recommendedName>
    <alternativeName>
        <fullName evidence="1">tRNA pseudouridine 54/55 synthase</fullName>
        <shortName evidence="1">Psi54/55 synthase</shortName>
    </alternativeName>
</protein>
<organism>
    <name type="scientific">Caldivirga maquilingensis (strain ATCC 700844 / DSM 13496 / JCM 10307 / IC-167)</name>
    <dbReference type="NCBI Taxonomy" id="397948"/>
    <lineage>
        <taxon>Archaea</taxon>
        <taxon>Thermoproteota</taxon>
        <taxon>Thermoprotei</taxon>
        <taxon>Thermoproteales</taxon>
        <taxon>Thermoproteaceae</taxon>
        <taxon>Caldivirga</taxon>
    </lineage>
</organism>
<name>PUS10_CALMQ</name>
<sequence>MSIIEDARKALLKYPLCDHCLGRLFASRGLMISNEERGRSIKNVLFMESLNSSTGTYNEDTLVALAKSGHRESLLFLRRMGKVIEQQPCFICGNLFDKININDIVSKVEEEINRQGIEFNSFQVGSTVNKGVIENEVKVSTELGITSSESIKRELNRLIGKVLADKLGKRYSRLNPDVVIKVNTSDGSVSVEVMPIYIEARYRKLIRGIPQVGDSSVASVAREVVSELRPLNVVLHFAGIEGPEVRVLGLGRPMIIEATRPLRRSLPGGIITRHGVQLLNLKAAGKVQVREIKSKAGELRRVFRILVKLHGSVTDEQLRSLEDYFSNRQIRQSMGKGRRVKLIYGLKVVPVHGSILELIVNTQGGFSVRRFITGEGTEPSVSGTLGIKVTPIEIDILNIWH</sequence>
<accession>A8MDD0</accession>
<proteinExistence type="inferred from homology"/>